<feature type="chain" id="PRO_0000216626" description="Photosystem II reaction center protein J">
    <location>
        <begin position="1"/>
        <end position="39"/>
    </location>
</feature>
<feature type="transmembrane region" description="Helical" evidence="1">
    <location>
        <begin position="7"/>
        <end position="27"/>
    </location>
</feature>
<dbReference type="EMBL" id="AY120853">
    <property type="protein sequence ID" value="AAM82677.1"/>
    <property type="molecule type" value="Genomic_DNA"/>
</dbReference>
<dbReference type="EMBL" id="CP000100">
    <property type="protein sequence ID" value="ABB57204.1"/>
    <property type="molecule type" value="Genomic_DNA"/>
</dbReference>
<dbReference type="RefSeq" id="WP_011377900.1">
    <property type="nucleotide sequence ID" value="NZ_JACJTX010000003.1"/>
</dbReference>
<dbReference type="SMR" id="Q8KPP0"/>
<dbReference type="STRING" id="1140.Synpcc7942_1174"/>
<dbReference type="TCDB" id="3.E.2.2.1">
    <property type="family name" value="the photosynthetic reaction center (prc) family"/>
</dbReference>
<dbReference type="PaxDb" id="1140-Synpcc7942_1174"/>
<dbReference type="KEGG" id="syf:Synpcc7942_1174"/>
<dbReference type="eggNOG" id="ENOG5033ABP">
    <property type="taxonomic scope" value="Bacteria"/>
</dbReference>
<dbReference type="HOGENOM" id="CLU_215151_0_0_3"/>
<dbReference type="BioCyc" id="MetaCyc:SYNPCC7942_1174-MONOMER"/>
<dbReference type="BioCyc" id="SYNEL:SYNPCC7942_1174-MONOMER"/>
<dbReference type="Proteomes" id="UP000889800">
    <property type="component" value="Chromosome"/>
</dbReference>
<dbReference type="GO" id="GO:0009539">
    <property type="term" value="C:photosystem II reaction center"/>
    <property type="evidence" value="ECO:0007669"/>
    <property type="project" value="InterPro"/>
</dbReference>
<dbReference type="GO" id="GO:0031676">
    <property type="term" value="C:plasma membrane-derived thylakoid membrane"/>
    <property type="evidence" value="ECO:0007669"/>
    <property type="project" value="UniProtKB-SubCell"/>
</dbReference>
<dbReference type="GO" id="GO:0015979">
    <property type="term" value="P:photosynthesis"/>
    <property type="evidence" value="ECO:0007669"/>
    <property type="project" value="UniProtKB-UniRule"/>
</dbReference>
<dbReference type="Gene3D" id="6.10.250.2070">
    <property type="match status" value="1"/>
</dbReference>
<dbReference type="HAMAP" id="MF_01305">
    <property type="entry name" value="PSII_PsbJ"/>
    <property type="match status" value="1"/>
</dbReference>
<dbReference type="InterPro" id="IPR002682">
    <property type="entry name" value="PSII_PsbJ"/>
</dbReference>
<dbReference type="InterPro" id="IPR037267">
    <property type="entry name" value="PSII_PsbJ_sf"/>
</dbReference>
<dbReference type="NCBIfam" id="NF002722">
    <property type="entry name" value="PRK02565.1"/>
    <property type="match status" value="1"/>
</dbReference>
<dbReference type="PANTHER" id="PTHR34812">
    <property type="entry name" value="PHOTOSYSTEM II REACTION CENTER PROTEIN J"/>
    <property type="match status" value="1"/>
</dbReference>
<dbReference type="PANTHER" id="PTHR34812:SF3">
    <property type="entry name" value="PHOTOSYSTEM II REACTION CENTER PROTEIN J"/>
    <property type="match status" value="1"/>
</dbReference>
<dbReference type="Pfam" id="PF01788">
    <property type="entry name" value="PsbJ"/>
    <property type="match status" value="1"/>
</dbReference>
<dbReference type="SUPFAM" id="SSF161021">
    <property type="entry name" value="Photosystem II reaction center protein J, PsbJ"/>
    <property type="match status" value="1"/>
</dbReference>
<accession>Q8KPP0</accession>
<accession>Q31P15</accession>
<name>PSBJ_SYNE7</name>
<proteinExistence type="inferred from homology"/>
<reference key="1">
    <citation type="submission" date="2002-06" db="EMBL/GenBank/DDBJ databases">
        <title>Synechococcus elongatus PCC7942 cosmid 7G3.</title>
        <authorList>
            <person name="Holtman C.K."/>
            <person name="Sandoval P."/>
            <person name="Chen Y."/>
            <person name="Socias T."/>
            <person name="Mohler B.J."/>
            <person name="McMurtry S."/>
            <person name="Gonzalez A."/>
            <person name="Salinas I."/>
            <person name="Golden S.S."/>
            <person name="Youderian P."/>
        </authorList>
    </citation>
    <scope>NUCLEOTIDE SEQUENCE [GENOMIC DNA]</scope>
</reference>
<reference key="2">
    <citation type="submission" date="2005-08" db="EMBL/GenBank/DDBJ databases">
        <title>Complete sequence of chromosome 1 of Synechococcus elongatus PCC 7942.</title>
        <authorList>
            <consortium name="US DOE Joint Genome Institute"/>
            <person name="Copeland A."/>
            <person name="Lucas S."/>
            <person name="Lapidus A."/>
            <person name="Barry K."/>
            <person name="Detter J.C."/>
            <person name="Glavina T."/>
            <person name="Hammon N."/>
            <person name="Israni S."/>
            <person name="Pitluck S."/>
            <person name="Schmutz J."/>
            <person name="Larimer F."/>
            <person name="Land M."/>
            <person name="Kyrpides N."/>
            <person name="Lykidis A."/>
            <person name="Golden S."/>
            <person name="Richardson P."/>
        </authorList>
    </citation>
    <scope>NUCLEOTIDE SEQUENCE [LARGE SCALE GENOMIC DNA]</scope>
    <source>
        <strain>ATCC 33912 / PCC 7942 / FACHB-805</strain>
    </source>
</reference>
<keyword id="KW-0472">Membrane</keyword>
<keyword id="KW-0602">Photosynthesis</keyword>
<keyword id="KW-0604">Photosystem II</keyword>
<keyword id="KW-0674">Reaction center</keyword>
<keyword id="KW-1185">Reference proteome</keyword>
<keyword id="KW-0793">Thylakoid</keyword>
<keyword id="KW-0812">Transmembrane</keyword>
<keyword id="KW-1133">Transmembrane helix</keyword>
<organism>
    <name type="scientific">Synechococcus elongatus (strain ATCC 33912 / PCC 7942 / FACHB-805)</name>
    <name type="common">Anacystis nidulans R2</name>
    <dbReference type="NCBI Taxonomy" id="1140"/>
    <lineage>
        <taxon>Bacteria</taxon>
        <taxon>Bacillati</taxon>
        <taxon>Cyanobacteriota</taxon>
        <taxon>Cyanophyceae</taxon>
        <taxon>Synechococcales</taxon>
        <taxon>Synechococcaceae</taxon>
        <taxon>Synechococcus</taxon>
    </lineage>
</organism>
<comment type="function">
    <text evidence="1">One of the components of the core complex of photosystem II (PSII). PSII is a light-driven water:plastoquinone oxidoreductase that uses light energy to abstract electrons from H(2)O, generating O(2) and a proton gradient subsequently used for ATP formation. It consists of a core antenna complex that captures photons, and an electron transfer chain that converts photonic excitation into a charge separation.</text>
</comment>
<comment type="subunit">
    <text evidence="1">PSII is composed of 1 copy each of membrane proteins PsbA, PsbB, PsbC, PsbD, PsbE, PsbF, PsbH, PsbI, PsbJ, PsbK, PsbL, PsbM, PsbT, PsbX, PsbY, PsbZ, Psb30/Ycf12, peripheral proteins PsbO, CyanoQ (PsbQ), PsbU, PsbV and a large number of cofactors. It forms dimeric complexes.</text>
</comment>
<comment type="subcellular location">
    <subcellularLocation>
        <location evidence="1">Cellular thylakoid membrane</location>
        <topology evidence="1">Single-pass membrane protein</topology>
    </subcellularLocation>
</comment>
<comment type="similarity">
    <text evidence="1">Belongs to the PsbJ family.</text>
</comment>
<sequence length="39" mass="3842">MAGGGRIPLWIVATVAGTGVLVVVGLFFYGAYAGLGSSL</sequence>
<evidence type="ECO:0000255" key="1">
    <source>
        <dbReference type="HAMAP-Rule" id="MF_01305"/>
    </source>
</evidence>
<protein>
    <recommendedName>
        <fullName evidence="1">Photosystem II reaction center protein J</fullName>
        <shortName evidence="1">PSII-J</shortName>
    </recommendedName>
</protein>
<gene>
    <name evidence="1" type="primary">psbJ</name>
    <name type="ordered locus">Synpcc7942_1174</name>
    <name type="ORF">see0055</name>
</gene>